<organism>
    <name type="scientific">Bos taurus</name>
    <name type="common">Bovine</name>
    <dbReference type="NCBI Taxonomy" id="9913"/>
    <lineage>
        <taxon>Eukaryota</taxon>
        <taxon>Metazoa</taxon>
        <taxon>Chordata</taxon>
        <taxon>Craniata</taxon>
        <taxon>Vertebrata</taxon>
        <taxon>Euteleostomi</taxon>
        <taxon>Mammalia</taxon>
        <taxon>Eutheria</taxon>
        <taxon>Laurasiatheria</taxon>
        <taxon>Artiodactyla</taxon>
        <taxon>Ruminantia</taxon>
        <taxon>Pecora</taxon>
        <taxon>Bovidae</taxon>
        <taxon>Bovinae</taxon>
        <taxon>Bos</taxon>
    </lineage>
</organism>
<reference key="1">
    <citation type="submission" date="2005-11" db="EMBL/GenBank/DDBJ databases">
        <authorList>
            <consortium name="NIH - Mammalian Gene Collection (MGC) project"/>
        </authorList>
    </citation>
    <scope>NUCLEOTIDE SEQUENCE [LARGE SCALE MRNA]</scope>
    <source>
        <strain>Crossbred X Angus</strain>
        <tissue>Liver</tissue>
    </source>
</reference>
<name>SHLB1_BOVIN</name>
<accession>Q32LM0</accession>
<evidence type="ECO:0000250" key="1"/>
<evidence type="ECO:0000250" key="2">
    <source>
        <dbReference type="UniProtKB" id="Q6AYE2"/>
    </source>
</evidence>
<evidence type="ECO:0000250" key="3">
    <source>
        <dbReference type="UniProtKB" id="Q9JK48"/>
    </source>
</evidence>
<evidence type="ECO:0000250" key="4">
    <source>
        <dbReference type="UniProtKB" id="Q9Y371"/>
    </source>
</evidence>
<evidence type="ECO:0000255" key="5"/>
<evidence type="ECO:0000255" key="6">
    <source>
        <dbReference type="PROSITE-ProRule" id="PRU00192"/>
    </source>
</evidence>
<evidence type="ECO:0000255" key="7">
    <source>
        <dbReference type="PROSITE-ProRule" id="PRU00361"/>
    </source>
</evidence>
<evidence type="ECO:0000305" key="8"/>
<dbReference type="EMBL" id="BC109515">
    <property type="protein sequence ID" value="AAI09516.1"/>
    <property type="molecule type" value="mRNA"/>
</dbReference>
<dbReference type="RefSeq" id="NP_001071461.1">
    <property type="nucleotide sequence ID" value="NM_001077993.2"/>
</dbReference>
<dbReference type="SMR" id="Q32LM0"/>
<dbReference type="FunCoup" id="Q32LM0">
    <property type="interactions" value="3157"/>
</dbReference>
<dbReference type="STRING" id="9913.ENSBTAP00000069535"/>
<dbReference type="PaxDb" id="9913-ENSBTAP00000041643"/>
<dbReference type="GeneID" id="533918"/>
<dbReference type="KEGG" id="bta:533918"/>
<dbReference type="CTD" id="51100"/>
<dbReference type="VEuPathDB" id="HostDB:ENSBTAG00000031171"/>
<dbReference type="eggNOG" id="KOG3725">
    <property type="taxonomic scope" value="Eukaryota"/>
</dbReference>
<dbReference type="InParanoid" id="Q32LM0"/>
<dbReference type="OMA" id="ETTYYAQ"/>
<dbReference type="OrthoDB" id="14167at2759"/>
<dbReference type="Proteomes" id="UP000009136">
    <property type="component" value="Chromosome 3"/>
</dbReference>
<dbReference type="Bgee" id="ENSBTAG00000031171">
    <property type="expression patterns" value="Expressed in spermatid and 106 other cell types or tissues"/>
</dbReference>
<dbReference type="GO" id="GO:0000421">
    <property type="term" value="C:autophagosome membrane"/>
    <property type="evidence" value="ECO:0007669"/>
    <property type="project" value="UniProtKB-SubCell"/>
</dbReference>
<dbReference type="GO" id="GO:0031410">
    <property type="term" value="C:cytoplasmic vesicle"/>
    <property type="evidence" value="ECO:0007669"/>
    <property type="project" value="UniProtKB-KW"/>
</dbReference>
<dbReference type="GO" id="GO:0000139">
    <property type="term" value="C:Golgi membrane"/>
    <property type="evidence" value="ECO:0007669"/>
    <property type="project" value="UniProtKB-SubCell"/>
</dbReference>
<dbReference type="GO" id="GO:0016020">
    <property type="term" value="C:membrane"/>
    <property type="evidence" value="ECO:0000318"/>
    <property type="project" value="GO_Central"/>
</dbReference>
<dbReference type="GO" id="GO:0030496">
    <property type="term" value="C:midbody"/>
    <property type="evidence" value="ECO:0007669"/>
    <property type="project" value="UniProtKB-SubCell"/>
</dbReference>
<dbReference type="GO" id="GO:0005741">
    <property type="term" value="C:mitochondrial outer membrane"/>
    <property type="evidence" value="ECO:0007669"/>
    <property type="project" value="UniProtKB-SubCell"/>
</dbReference>
<dbReference type="GO" id="GO:0008289">
    <property type="term" value="F:lipid binding"/>
    <property type="evidence" value="ECO:0007669"/>
    <property type="project" value="UniProtKB-KW"/>
</dbReference>
<dbReference type="GO" id="GO:0006915">
    <property type="term" value="P:apoptotic process"/>
    <property type="evidence" value="ECO:0007669"/>
    <property type="project" value="UniProtKB-KW"/>
</dbReference>
<dbReference type="GO" id="GO:0061024">
    <property type="term" value="P:membrane organization"/>
    <property type="evidence" value="ECO:0000318"/>
    <property type="project" value="GO_Central"/>
</dbReference>
<dbReference type="CDD" id="cd07616">
    <property type="entry name" value="BAR_Endophilin_B1"/>
    <property type="match status" value="1"/>
</dbReference>
<dbReference type="CDD" id="cd11945">
    <property type="entry name" value="SH3_Endophilin_B1"/>
    <property type="match status" value="1"/>
</dbReference>
<dbReference type="FunFam" id="1.20.1270.60:FF:000017">
    <property type="entry name" value="endophilin-B2 isoform X1"/>
    <property type="match status" value="1"/>
</dbReference>
<dbReference type="FunFam" id="2.30.30.40:FF:000028">
    <property type="entry name" value="endophilin-B2 isoform X1"/>
    <property type="match status" value="1"/>
</dbReference>
<dbReference type="Gene3D" id="1.20.1270.60">
    <property type="entry name" value="Arfaptin homology (AH) domain/BAR domain"/>
    <property type="match status" value="1"/>
</dbReference>
<dbReference type="Gene3D" id="2.30.30.40">
    <property type="entry name" value="SH3 Domains"/>
    <property type="match status" value="1"/>
</dbReference>
<dbReference type="InterPro" id="IPR027267">
    <property type="entry name" value="AH/BAR_dom_sf"/>
</dbReference>
<dbReference type="InterPro" id="IPR004148">
    <property type="entry name" value="BAR_dom"/>
</dbReference>
<dbReference type="InterPro" id="IPR050384">
    <property type="entry name" value="Endophilin_SH3RF"/>
</dbReference>
<dbReference type="InterPro" id="IPR036028">
    <property type="entry name" value="SH3-like_dom_sf"/>
</dbReference>
<dbReference type="InterPro" id="IPR001452">
    <property type="entry name" value="SH3_domain"/>
</dbReference>
<dbReference type="InterPro" id="IPR035695">
    <property type="entry name" value="SH3GLB1_BAR"/>
</dbReference>
<dbReference type="InterPro" id="IPR028503">
    <property type="entry name" value="SH3GLB_SH3"/>
</dbReference>
<dbReference type="PANTHER" id="PTHR14167:SF52">
    <property type="entry name" value="ENDOPHILIN-B1"/>
    <property type="match status" value="1"/>
</dbReference>
<dbReference type="PANTHER" id="PTHR14167">
    <property type="entry name" value="SH3 DOMAIN-CONTAINING"/>
    <property type="match status" value="1"/>
</dbReference>
<dbReference type="Pfam" id="PF03114">
    <property type="entry name" value="BAR"/>
    <property type="match status" value="1"/>
</dbReference>
<dbReference type="Pfam" id="PF14604">
    <property type="entry name" value="SH3_9"/>
    <property type="match status" value="1"/>
</dbReference>
<dbReference type="SMART" id="SM00721">
    <property type="entry name" value="BAR"/>
    <property type="match status" value="1"/>
</dbReference>
<dbReference type="SMART" id="SM00326">
    <property type="entry name" value="SH3"/>
    <property type="match status" value="1"/>
</dbReference>
<dbReference type="SUPFAM" id="SSF103657">
    <property type="entry name" value="BAR/IMD domain-like"/>
    <property type="match status" value="1"/>
</dbReference>
<dbReference type="SUPFAM" id="SSF50044">
    <property type="entry name" value="SH3-domain"/>
    <property type="match status" value="1"/>
</dbReference>
<dbReference type="PROSITE" id="PS51021">
    <property type="entry name" value="BAR"/>
    <property type="match status" value="1"/>
</dbReference>
<dbReference type="PROSITE" id="PS50002">
    <property type="entry name" value="SH3"/>
    <property type="match status" value="1"/>
</dbReference>
<feature type="chain" id="PRO_0000285842" description="Endophilin-B1">
    <location>
        <begin position="1"/>
        <end position="365"/>
    </location>
</feature>
<feature type="domain" description="BAR" evidence="7">
    <location>
        <begin position="27"/>
        <end position="261"/>
    </location>
</feature>
<feature type="domain" description="SH3" evidence="6">
    <location>
        <begin position="305"/>
        <end position="365"/>
    </location>
</feature>
<feature type="region of interest" description="Required for membrane binding" evidence="4">
    <location>
        <begin position="1"/>
        <end position="37"/>
    </location>
</feature>
<feature type="region of interest" description="Membrane-binding amphipathic helix" evidence="1">
    <location>
        <begin position="1"/>
        <end position="30"/>
    </location>
</feature>
<feature type="coiled-coil region" evidence="5">
    <location>
        <begin position="155"/>
        <end position="195"/>
    </location>
</feature>
<feature type="modified residue" description="N-acetylmethionine" evidence="4">
    <location>
        <position position="1"/>
    </location>
</feature>
<feature type="modified residue" description="Phosphothreonine; by CDK5" evidence="4">
    <location>
        <position position="145"/>
    </location>
</feature>
<gene>
    <name type="primary">SH3GLB1</name>
</gene>
<sequence>MNIMDFNVKKLAADAGTFLSRAVQFTEEKLGQAEKTELDAHLENLLSKAECTKIWTEKIMKQTEVLLQPNPNARIEEFVYEKLDRKAPSRINNPELLGQYMIDAGTEFGPGTAYGNALIKCGETQKRIGTADRELIQTSALNFLTPLRNFIEGDYKTIAKERKLLQNKRLDLDAAKTRLKKAKAAETRASSEQELRITQSEFDRQAEITRLLLEGISSTHAHHLRCLNDFVEAQMTYYAQCYQYMLDLQKQLGSFPSNYHSNNNQTAVAPVPSASSNVIGSSALTSTSSLVITSPSNLTDLKECGGSRRARVLYDYDAANSTELSLLADEVITVFSVVGMDSDWLMGERGNQKGRVPITYLELLN</sequence>
<keyword id="KW-0007">Acetylation</keyword>
<keyword id="KW-0053">Apoptosis</keyword>
<keyword id="KW-0175">Coiled coil</keyword>
<keyword id="KW-0963">Cytoplasm</keyword>
<keyword id="KW-0968">Cytoplasmic vesicle</keyword>
<keyword id="KW-0333">Golgi apparatus</keyword>
<keyword id="KW-0446">Lipid-binding</keyword>
<keyword id="KW-0472">Membrane</keyword>
<keyword id="KW-0496">Mitochondrion</keyword>
<keyword id="KW-1000">Mitochondrion outer membrane</keyword>
<keyword id="KW-0597">Phosphoprotein</keyword>
<keyword id="KW-1185">Reference proteome</keyword>
<keyword id="KW-0728">SH3 domain</keyword>
<proteinExistence type="evidence at transcript level"/>
<protein>
    <recommendedName>
        <fullName>Endophilin-B1</fullName>
    </recommendedName>
    <alternativeName>
        <fullName>SH3 domain-containing GRB2-like protein B1</fullName>
    </alternativeName>
</protein>
<comment type="function">
    <text evidence="3 4">May be required for normal outer mitochondrial membrane dynamics. Required for coatomer-mediated retrograde transport in certain cells. May recruit other proteins to membranes with high curvature. May promote membrane fusion. Involved in activation of caspase-dependent apoptosis by promoting BAX/BAK1 activation. Involved in caspase-independent apoptosis during nutrition starvation and involved in the regulation of autophagy. Activates lipid kinase activity of PIK3C3 during autophagy probably by associating with the PI3K complex II (PI3KC3-C2). Associated with PI3KC3-C2 during autophagy may regulate the trafficking of ATG9A from the Golgi complex to the peripheral cytoplasm for the formation of autophagosomes by inducing Golgi membrane tubulation and fragmentation. Involved in regulation of degradative endocytic trafficking and cytokinesis, probably in the context of PI3KC3-C2 (By similarity).</text>
</comment>
<comment type="subunit">
    <text evidence="3 4">Homodimer, and heterodimer with SH3GLB2. Binds BAX; induction of apoptosis augments BAX binding. Binds DNM1, HTT, AMPH, BIN1 and ARFGAP1. Interacts with UVRAG; UVRAG bridges the interaction to BECN1 indicative for an association with the PI3K complex II (PI3KC3-C2) (By similarity).</text>
</comment>
<comment type="subcellular location">
    <subcellularLocation>
        <location evidence="2 4">Cytoplasm</location>
    </subcellularLocation>
    <subcellularLocation>
        <location evidence="2 3 4">Golgi apparatus membrane</location>
        <topology evidence="2">Peripheral membrane protein</topology>
    </subcellularLocation>
    <subcellularLocation>
        <location evidence="4">Mitochondrion outer membrane</location>
        <topology evidence="4">Peripheral membrane protein</topology>
    </subcellularLocation>
    <subcellularLocation>
        <location evidence="4">Cytoplasmic vesicle</location>
        <location evidence="4">Autophagosome membrane</location>
    </subcellularLocation>
    <subcellularLocation>
        <location evidence="4">Midbody</location>
    </subcellularLocation>
    <text evidence="4">Association with the Golgi apparatus depends on the cell type. Following starvation colocalizes with ATG5 and LC3 autophagy-related protein(s)on autophagosomal membranes.</text>
</comment>
<comment type="domain">
    <text evidence="1">An N-terminal amphipathic helix, the BAR domain and a second amphipathic helix inserted into helix 1 of the BAR domain (N-BAR domain) induce membrane curvature and bind curved membranes.</text>
</comment>
<comment type="domain">
    <text evidence="4">The SH3 domain is required and sufficient for the interaction with UVRAG.</text>
</comment>
<comment type="PTM">
    <text evidence="1">Phosphorylated at Thr-145 by CDK5; this phosphorylation is required for autophagy induction in starved neurons and facilitates homodimerization.</text>
</comment>
<comment type="similarity">
    <text evidence="8">Belongs to the endophilin family.</text>
</comment>